<keyword id="KW-0238">DNA-binding</keyword>
<keyword id="KW-0539">Nucleus</keyword>
<keyword id="KW-1185">Reference proteome</keyword>
<keyword id="KW-0677">Repeat</keyword>
<keyword id="KW-0804">Transcription</keyword>
<keyword id="KW-0805">Transcription regulation</keyword>
<gene>
    <name type="ordered locus">At5g18090</name>
    <name type="ORF">MRG7.5</name>
</gene>
<accession>Q9FK61</accession>
<comment type="subcellular location">
    <subcellularLocation>
        <location evidence="1">Nucleus</location>
    </subcellularLocation>
</comment>
<proteinExistence type="evidence at transcript level"/>
<sequence length="301" mass="34675">MKNKAFGQIMDDAENPGFFKILRSADLSSEIMRGIPLNFIKSISEEELSAKMLLKVSWGSSWPIKICRNPSFYFMEKKGWDQFLSDNGLGNDEFLTFTHQGNMCFTVDIYQIDGKELLTPRRSATIASSSGRNKREQRNNIYKDVKEEEDIESWSESSYPGHKTAESTGRRQRLSLSNKKAKETEKSKKKKMKVESISYDSQDDSLSLVPEFTLTIKKSYLIFLGIPKMFEELHMPTEATMFKIHDPEGKRSWDVMYKFSNNQTRFCAGWIRLAKELGLEIGDVCTFTLIKPTEMLVRVSK</sequence>
<organism>
    <name type="scientific">Arabidopsis thaliana</name>
    <name type="common">Mouse-ear cress</name>
    <dbReference type="NCBI Taxonomy" id="3702"/>
    <lineage>
        <taxon>Eukaryota</taxon>
        <taxon>Viridiplantae</taxon>
        <taxon>Streptophyta</taxon>
        <taxon>Embryophyta</taxon>
        <taxon>Tracheophyta</taxon>
        <taxon>Spermatophyta</taxon>
        <taxon>Magnoliopsida</taxon>
        <taxon>eudicotyledons</taxon>
        <taxon>Gunneridae</taxon>
        <taxon>Pentapetalae</taxon>
        <taxon>rosids</taxon>
        <taxon>malvids</taxon>
        <taxon>Brassicales</taxon>
        <taxon>Brassicaceae</taxon>
        <taxon>Camelineae</taxon>
        <taxon>Arabidopsis</taxon>
    </lineage>
</organism>
<evidence type="ECO:0000255" key="1">
    <source>
        <dbReference type="PROSITE-ProRule" id="PRU00326"/>
    </source>
</evidence>
<evidence type="ECO:0000256" key="2">
    <source>
        <dbReference type="SAM" id="MobiDB-lite"/>
    </source>
</evidence>
<feature type="chain" id="PRO_0000375162" description="B3 domain-containing protein At5g18090">
    <location>
        <begin position="1"/>
        <end position="301"/>
    </location>
</feature>
<feature type="DNA-binding region" description="TF-B3 1" evidence="1">
    <location>
        <begin position="18"/>
        <end position="113"/>
    </location>
</feature>
<feature type="DNA-binding region" description="TF-B3 2" evidence="1">
    <location>
        <begin position="209"/>
        <end position="301"/>
    </location>
</feature>
<feature type="region of interest" description="Disordered" evidence="2">
    <location>
        <begin position="123"/>
        <end position="142"/>
    </location>
</feature>
<feature type="region of interest" description="Disordered" evidence="2">
    <location>
        <begin position="153"/>
        <end position="194"/>
    </location>
</feature>
<feature type="compositionally biased region" description="Basic and acidic residues" evidence="2">
    <location>
        <begin position="133"/>
        <end position="142"/>
    </location>
</feature>
<name>Y5809_ARATH</name>
<protein>
    <recommendedName>
        <fullName>B3 domain-containing protein At5g18090</fullName>
    </recommendedName>
</protein>
<reference key="1">
    <citation type="journal article" date="1998" name="DNA Res.">
        <title>Structural analysis of Arabidopsis thaliana chromosome 5. VI. Sequence features of the regions of 1,367,185 bp covered by 19 physically assigned P1 and TAC clones.</title>
        <authorList>
            <person name="Kotani H."/>
            <person name="Nakamura Y."/>
            <person name="Sato S."/>
            <person name="Asamizu E."/>
            <person name="Kaneko T."/>
            <person name="Miyajima N."/>
            <person name="Tabata S."/>
        </authorList>
    </citation>
    <scope>NUCLEOTIDE SEQUENCE [LARGE SCALE GENOMIC DNA]</scope>
    <source>
        <strain>cv. Columbia</strain>
    </source>
</reference>
<reference key="2">
    <citation type="journal article" date="2017" name="Plant J.">
        <title>Araport11: a complete reannotation of the Arabidopsis thaliana reference genome.</title>
        <authorList>
            <person name="Cheng C.Y."/>
            <person name="Krishnakumar V."/>
            <person name="Chan A.P."/>
            <person name="Thibaud-Nissen F."/>
            <person name="Schobel S."/>
            <person name="Town C.D."/>
        </authorList>
    </citation>
    <scope>GENOME REANNOTATION</scope>
    <source>
        <strain>cv. Columbia</strain>
    </source>
</reference>
<reference key="3">
    <citation type="journal article" date="2003" name="Science">
        <title>Empirical analysis of transcriptional activity in the Arabidopsis genome.</title>
        <authorList>
            <person name="Yamada K."/>
            <person name="Lim J."/>
            <person name="Dale J.M."/>
            <person name="Chen H."/>
            <person name="Shinn P."/>
            <person name="Palm C.J."/>
            <person name="Southwick A.M."/>
            <person name="Wu H.C."/>
            <person name="Kim C.J."/>
            <person name="Nguyen M."/>
            <person name="Pham P.K."/>
            <person name="Cheuk R.F."/>
            <person name="Karlin-Newmann G."/>
            <person name="Liu S.X."/>
            <person name="Lam B."/>
            <person name="Sakano H."/>
            <person name="Wu T."/>
            <person name="Yu G."/>
            <person name="Miranda M."/>
            <person name="Quach H.L."/>
            <person name="Tripp M."/>
            <person name="Chang C.H."/>
            <person name="Lee J.M."/>
            <person name="Toriumi M.J."/>
            <person name="Chan M.M."/>
            <person name="Tang C.C."/>
            <person name="Onodera C.S."/>
            <person name="Deng J.M."/>
            <person name="Akiyama K."/>
            <person name="Ansari Y."/>
            <person name="Arakawa T."/>
            <person name="Banh J."/>
            <person name="Banno F."/>
            <person name="Bowser L."/>
            <person name="Brooks S.Y."/>
            <person name="Carninci P."/>
            <person name="Chao Q."/>
            <person name="Choy N."/>
            <person name="Enju A."/>
            <person name="Goldsmith A.D."/>
            <person name="Gurjal M."/>
            <person name="Hansen N.F."/>
            <person name="Hayashizaki Y."/>
            <person name="Johnson-Hopson C."/>
            <person name="Hsuan V.W."/>
            <person name="Iida K."/>
            <person name="Karnes M."/>
            <person name="Khan S."/>
            <person name="Koesema E."/>
            <person name="Ishida J."/>
            <person name="Jiang P.X."/>
            <person name="Jones T."/>
            <person name="Kawai J."/>
            <person name="Kamiya A."/>
            <person name="Meyers C."/>
            <person name="Nakajima M."/>
            <person name="Narusaka M."/>
            <person name="Seki M."/>
            <person name="Sakurai T."/>
            <person name="Satou M."/>
            <person name="Tamse R."/>
            <person name="Vaysberg M."/>
            <person name="Wallender E.K."/>
            <person name="Wong C."/>
            <person name="Yamamura Y."/>
            <person name="Yuan S."/>
            <person name="Shinozaki K."/>
            <person name="Davis R.W."/>
            <person name="Theologis A."/>
            <person name="Ecker J.R."/>
        </authorList>
    </citation>
    <scope>NUCLEOTIDE SEQUENCE [LARGE SCALE MRNA]</scope>
    <source>
        <strain>cv. Columbia</strain>
    </source>
</reference>
<reference key="4">
    <citation type="submission" date="2002-03" db="EMBL/GenBank/DDBJ databases">
        <title>Full-length cDNA from Arabidopsis thaliana.</title>
        <authorList>
            <person name="Brover V.V."/>
            <person name="Troukhan M.E."/>
            <person name="Alexandrov N.A."/>
            <person name="Lu Y.-P."/>
            <person name="Flavell R.B."/>
            <person name="Feldmann K.A."/>
        </authorList>
    </citation>
    <scope>NUCLEOTIDE SEQUENCE [LARGE SCALE MRNA]</scope>
</reference>
<reference key="5">
    <citation type="journal article" date="2008" name="Trends Plant Sci.">
        <title>The plant B3 superfamily.</title>
        <authorList>
            <person name="Swaminathan K."/>
            <person name="Peterson K."/>
            <person name="Jack T."/>
        </authorList>
    </citation>
    <scope>GENE FAMILY</scope>
</reference>
<dbReference type="EMBL" id="AB012246">
    <property type="protein sequence ID" value="BAB09467.1"/>
    <property type="molecule type" value="Genomic_DNA"/>
</dbReference>
<dbReference type="EMBL" id="CP002688">
    <property type="protein sequence ID" value="AED92505.1"/>
    <property type="molecule type" value="Genomic_DNA"/>
</dbReference>
<dbReference type="EMBL" id="BT004099">
    <property type="protein sequence ID" value="AAO42124.1"/>
    <property type="molecule type" value="mRNA"/>
</dbReference>
<dbReference type="EMBL" id="BT005553">
    <property type="protein sequence ID" value="AAO63973.1"/>
    <property type="molecule type" value="mRNA"/>
</dbReference>
<dbReference type="EMBL" id="AY087853">
    <property type="protein sequence ID" value="AAM67335.1"/>
    <property type="molecule type" value="mRNA"/>
</dbReference>
<dbReference type="RefSeq" id="NP_197310.1">
    <property type="nucleotide sequence ID" value="NM_121814.3"/>
</dbReference>
<dbReference type="SMR" id="Q9FK61"/>
<dbReference type="BioGRID" id="16912">
    <property type="interactions" value="2"/>
</dbReference>
<dbReference type="FunCoup" id="Q9FK61">
    <property type="interactions" value="1"/>
</dbReference>
<dbReference type="IntAct" id="Q9FK61">
    <property type="interactions" value="2"/>
</dbReference>
<dbReference type="STRING" id="3702.Q9FK61"/>
<dbReference type="iPTMnet" id="Q9FK61"/>
<dbReference type="PaxDb" id="3702-AT5G18090.1"/>
<dbReference type="ProteomicsDB" id="242910"/>
<dbReference type="EnsemblPlants" id="AT5G18090.1">
    <property type="protein sequence ID" value="AT5G18090.1"/>
    <property type="gene ID" value="AT5G18090"/>
</dbReference>
<dbReference type="GeneID" id="831636"/>
<dbReference type="Gramene" id="AT5G18090.1">
    <property type="protein sequence ID" value="AT5G18090.1"/>
    <property type="gene ID" value="AT5G18090"/>
</dbReference>
<dbReference type="KEGG" id="ath:AT5G18090"/>
<dbReference type="Araport" id="AT5G18090"/>
<dbReference type="TAIR" id="AT5G18090"/>
<dbReference type="eggNOG" id="ENOG502RRIE">
    <property type="taxonomic scope" value="Eukaryota"/>
</dbReference>
<dbReference type="HOGENOM" id="CLU_083136_0_0_1"/>
<dbReference type="InParanoid" id="Q9FK61"/>
<dbReference type="OMA" id="HIFRTRC"/>
<dbReference type="OrthoDB" id="1666376at2759"/>
<dbReference type="PhylomeDB" id="Q9FK61"/>
<dbReference type="PRO" id="PR:Q9FK61"/>
<dbReference type="Proteomes" id="UP000006548">
    <property type="component" value="Chromosome 5"/>
</dbReference>
<dbReference type="ExpressionAtlas" id="Q9FK61">
    <property type="expression patterns" value="baseline and differential"/>
</dbReference>
<dbReference type="GO" id="GO:0005634">
    <property type="term" value="C:nucleus"/>
    <property type="evidence" value="ECO:0007669"/>
    <property type="project" value="UniProtKB-SubCell"/>
</dbReference>
<dbReference type="GO" id="GO:0003677">
    <property type="term" value="F:DNA binding"/>
    <property type="evidence" value="ECO:0007669"/>
    <property type="project" value="UniProtKB-KW"/>
</dbReference>
<dbReference type="CDD" id="cd10017">
    <property type="entry name" value="B3_DNA"/>
    <property type="match status" value="2"/>
</dbReference>
<dbReference type="Gene3D" id="2.40.330.10">
    <property type="entry name" value="DNA-binding pseudobarrel domain"/>
    <property type="match status" value="2"/>
</dbReference>
<dbReference type="InterPro" id="IPR003340">
    <property type="entry name" value="B3_DNA-bd"/>
</dbReference>
<dbReference type="InterPro" id="IPR015300">
    <property type="entry name" value="DNA-bd_pseudobarrel_sf"/>
</dbReference>
<dbReference type="InterPro" id="IPR039218">
    <property type="entry name" value="REM_fam"/>
</dbReference>
<dbReference type="PANTHER" id="PTHR31674">
    <property type="entry name" value="B3 DOMAIN-CONTAINING PROTEIN REM-LIKE 3-RELATED"/>
    <property type="match status" value="1"/>
</dbReference>
<dbReference type="PANTHER" id="PTHR31674:SF62">
    <property type="entry name" value="B3 DOMAIN-CONTAINING PROTEIN REM14-RELATED"/>
    <property type="match status" value="1"/>
</dbReference>
<dbReference type="Pfam" id="PF02362">
    <property type="entry name" value="B3"/>
    <property type="match status" value="2"/>
</dbReference>
<dbReference type="SMART" id="SM01019">
    <property type="entry name" value="B3"/>
    <property type="match status" value="2"/>
</dbReference>
<dbReference type="SUPFAM" id="SSF101936">
    <property type="entry name" value="DNA-binding pseudobarrel domain"/>
    <property type="match status" value="2"/>
</dbReference>
<dbReference type="PROSITE" id="PS50863">
    <property type="entry name" value="B3"/>
    <property type="match status" value="2"/>
</dbReference>